<evidence type="ECO:0000255" key="1">
    <source>
        <dbReference type="HAMAP-Rule" id="MF_00382"/>
    </source>
</evidence>
<evidence type="ECO:0000305" key="2"/>
<name>RL20_NEIMA</name>
<reference key="1">
    <citation type="journal article" date="2000" name="Nature">
        <title>Complete DNA sequence of a serogroup A strain of Neisseria meningitidis Z2491.</title>
        <authorList>
            <person name="Parkhill J."/>
            <person name="Achtman M."/>
            <person name="James K.D."/>
            <person name="Bentley S.D."/>
            <person name="Churcher C.M."/>
            <person name="Klee S.R."/>
            <person name="Morelli G."/>
            <person name="Basham D."/>
            <person name="Brown D."/>
            <person name="Chillingworth T."/>
            <person name="Davies R.M."/>
            <person name="Davis P."/>
            <person name="Devlin K."/>
            <person name="Feltwell T."/>
            <person name="Hamlin N."/>
            <person name="Holroyd S."/>
            <person name="Jagels K."/>
            <person name="Leather S."/>
            <person name="Moule S."/>
            <person name="Mungall K.L."/>
            <person name="Quail M.A."/>
            <person name="Rajandream M.A."/>
            <person name="Rutherford K.M."/>
            <person name="Simmonds M."/>
            <person name="Skelton J."/>
            <person name="Whitehead S."/>
            <person name="Spratt B.G."/>
            <person name="Barrell B.G."/>
        </authorList>
    </citation>
    <scope>NUCLEOTIDE SEQUENCE [LARGE SCALE GENOMIC DNA]</scope>
    <source>
        <strain>DSM 15465 / Z2491</strain>
    </source>
</reference>
<accession>Q9JVA1</accession>
<accession>A1IQX5</accession>
<comment type="function">
    <text evidence="1">Binds directly to 23S ribosomal RNA and is necessary for the in vitro assembly process of the 50S ribosomal subunit. It is not involved in the protein synthesizing functions of that subunit.</text>
</comment>
<comment type="similarity">
    <text evidence="1">Belongs to the bacterial ribosomal protein bL20 family.</text>
</comment>
<sequence>MPRVKRGVTARARHQKIFALAKGYRGRRKNVYRVAKQAVMKAGQYAYRDRRQRKRQFRQLWIVRINAGARENGLSYSKFMNGLKRASIEIDRKVLADLAVFDKAAFAQLVEKAKAALAA</sequence>
<protein>
    <recommendedName>
        <fullName evidence="1">Large ribosomal subunit protein bL20</fullName>
    </recommendedName>
    <alternativeName>
        <fullName evidence="2">50S ribosomal protein L20</fullName>
    </alternativeName>
</protein>
<proteinExistence type="inferred from homology"/>
<gene>
    <name evidence="1" type="primary">rplT</name>
    <name type="ordered locus">NMA0932</name>
</gene>
<feature type="chain" id="PRO_0000177192" description="Large ribosomal subunit protein bL20">
    <location>
        <begin position="1"/>
        <end position="119"/>
    </location>
</feature>
<dbReference type="EMBL" id="AL157959">
    <property type="protein sequence ID" value="CAM08159.1"/>
    <property type="molecule type" value="Genomic_DNA"/>
</dbReference>
<dbReference type="PIR" id="E81939">
    <property type="entry name" value="E81939"/>
</dbReference>
<dbReference type="RefSeq" id="WP_002214103.1">
    <property type="nucleotide sequence ID" value="NC_003116.1"/>
</dbReference>
<dbReference type="SMR" id="Q9JVA1"/>
<dbReference type="EnsemblBacteria" id="CAM08159">
    <property type="protein sequence ID" value="CAM08159"/>
    <property type="gene ID" value="NMA0932"/>
</dbReference>
<dbReference type="GeneID" id="93386451"/>
<dbReference type="KEGG" id="nma:NMA0932"/>
<dbReference type="HOGENOM" id="CLU_123265_0_1_4"/>
<dbReference type="Proteomes" id="UP000000626">
    <property type="component" value="Chromosome"/>
</dbReference>
<dbReference type="GO" id="GO:1990904">
    <property type="term" value="C:ribonucleoprotein complex"/>
    <property type="evidence" value="ECO:0007669"/>
    <property type="project" value="UniProtKB-KW"/>
</dbReference>
<dbReference type="GO" id="GO:0005840">
    <property type="term" value="C:ribosome"/>
    <property type="evidence" value="ECO:0007669"/>
    <property type="project" value="UniProtKB-KW"/>
</dbReference>
<dbReference type="GO" id="GO:0019843">
    <property type="term" value="F:rRNA binding"/>
    <property type="evidence" value="ECO:0007669"/>
    <property type="project" value="UniProtKB-UniRule"/>
</dbReference>
<dbReference type="GO" id="GO:0003735">
    <property type="term" value="F:structural constituent of ribosome"/>
    <property type="evidence" value="ECO:0007669"/>
    <property type="project" value="InterPro"/>
</dbReference>
<dbReference type="GO" id="GO:0000027">
    <property type="term" value="P:ribosomal large subunit assembly"/>
    <property type="evidence" value="ECO:0007669"/>
    <property type="project" value="UniProtKB-UniRule"/>
</dbReference>
<dbReference type="GO" id="GO:0006412">
    <property type="term" value="P:translation"/>
    <property type="evidence" value="ECO:0007669"/>
    <property type="project" value="InterPro"/>
</dbReference>
<dbReference type="CDD" id="cd07026">
    <property type="entry name" value="Ribosomal_L20"/>
    <property type="match status" value="1"/>
</dbReference>
<dbReference type="FunFam" id="1.10.1900.20:FF:000001">
    <property type="entry name" value="50S ribosomal protein L20"/>
    <property type="match status" value="1"/>
</dbReference>
<dbReference type="Gene3D" id="6.10.160.10">
    <property type="match status" value="1"/>
</dbReference>
<dbReference type="Gene3D" id="1.10.1900.20">
    <property type="entry name" value="Ribosomal protein L20"/>
    <property type="match status" value="1"/>
</dbReference>
<dbReference type="HAMAP" id="MF_00382">
    <property type="entry name" value="Ribosomal_bL20"/>
    <property type="match status" value="1"/>
</dbReference>
<dbReference type="InterPro" id="IPR005813">
    <property type="entry name" value="Ribosomal_bL20"/>
</dbReference>
<dbReference type="InterPro" id="IPR049946">
    <property type="entry name" value="RIBOSOMAL_L20_CS"/>
</dbReference>
<dbReference type="InterPro" id="IPR035566">
    <property type="entry name" value="Ribosomal_protein_bL20_C"/>
</dbReference>
<dbReference type="NCBIfam" id="TIGR01032">
    <property type="entry name" value="rplT_bact"/>
    <property type="match status" value="1"/>
</dbReference>
<dbReference type="PANTHER" id="PTHR10986">
    <property type="entry name" value="39S RIBOSOMAL PROTEIN L20"/>
    <property type="match status" value="1"/>
</dbReference>
<dbReference type="Pfam" id="PF00453">
    <property type="entry name" value="Ribosomal_L20"/>
    <property type="match status" value="1"/>
</dbReference>
<dbReference type="PRINTS" id="PR00062">
    <property type="entry name" value="RIBOSOMALL20"/>
</dbReference>
<dbReference type="SUPFAM" id="SSF74731">
    <property type="entry name" value="Ribosomal protein L20"/>
    <property type="match status" value="1"/>
</dbReference>
<dbReference type="PROSITE" id="PS00937">
    <property type="entry name" value="RIBOSOMAL_L20"/>
    <property type="match status" value="1"/>
</dbReference>
<organism>
    <name type="scientific">Neisseria meningitidis serogroup A / serotype 4A (strain DSM 15465 / Z2491)</name>
    <dbReference type="NCBI Taxonomy" id="122587"/>
    <lineage>
        <taxon>Bacteria</taxon>
        <taxon>Pseudomonadati</taxon>
        <taxon>Pseudomonadota</taxon>
        <taxon>Betaproteobacteria</taxon>
        <taxon>Neisseriales</taxon>
        <taxon>Neisseriaceae</taxon>
        <taxon>Neisseria</taxon>
    </lineage>
</organism>
<keyword id="KW-0687">Ribonucleoprotein</keyword>
<keyword id="KW-0689">Ribosomal protein</keyword>
<keyword id="KW-0694">RNA-binding</keyword>
<keyword id="KW-0699">rRNA-binding</keyword>